<proteinExistence type="inferred from homology"/>
<gene>
    <name evidence="1" type="primary">glyA</name>
    <name type="ordered locus">SCH_2549</name>
</gene>
<dbReference type="EC" id="2.1.2.1" evidence="1"/>
<dbReference type="EMBL" id="AE017220">
    <property type="protein sequence ID" value="AAX66455.1"/>
    <property type="molecule type" value="Genomic_DNA"/>
</dbReference>
<dbReference type="RefSeq" id="WP_000919178.1">
    <property type="nucleotide sequence ID" value="NC_006905.1"/>
</dbReference>
<dbReference type="SMR" id="Q57LF7"/>
<dbReference type="KEGG" id="sec:SCH_2549"/>
<dbReference type="HOGENOM" id="CLU_022477_2_1_6"/>
<dbReference type="UniPathway" id="UPA00193"/>
<dbReference type="UniPathway" id="UPA00288">
    <property type="reaction ID" value="UER01023"/>
</dbReference>
<dbReference type="Proteomes" id="UP000000538">
    <property type="component" value="Chromosome"/>
</dbReference>
<dbReference type="GO" id="GO:0005829">
    <property type="term" value="C:cytosol"/>
    <property type="evidence" value="ECO:0007669"/>
    <property type="project" value="TreeGrafter"/>
</dbReference>
<dbReference type="GO" id="GO:0004372">
    <property type="term" value="F:glycine hydroxymethyltransferase activity"/>
    <property type="evidence" value="ECO:0007669"/>
    <property type="project" value="UniProtKB-UniRule"/>
</dbReference>
<dbReference type="GO" id="GO:0030170">
    <property type="term" value="F:pyridoxal phosphate binding"/>
    <property type="evidence" value="ECO:0007669"/>
    <property type="project" value="UniProtKB-UniRule"/>
</dbReference>
<dbReference type="GO" id="GO:0019264">
    <property type="term" value="P:glycine biosynthetic process from serine"/>
    <property type="evidence" value="ECO:0007669"/>
    <property type="project" value="UniProtKB-UniRule"/>
</dbReference>
<dbReference type="GO" id="GO:0035999">
    <property type="term" value="P:tetrahydrofolate interconversion"/>
    <property type="evidence" value="ECO:0007669"/>
    <property type="project" value="UniProtKB-UniRule"/>
</dbReference>
<dbReference type="CDD" id="cd00378">
    <property type="entry name" value="SHMT"/>
    <property type="match status" value="1"/>
</dbReference>
<dbReference type="FunFam" id="3.40.640.10:FF:000001">
    <property type="entry name" value="Serine hydroxymethyltransferase"/>
    <property type="match status" value="1"/>
</dbReference>
<dbReference type="FunFam" id="3.90.1150.10:FF:000003">
    <property type="entry name" value="Serine hydroxymethyltransferase"/>
    <property type="match status" value="1"/>
</dbReference>
<dbReference type="Gene3D" id="3.90.1150.10">
    <property type="entry name" value="Aspartate Aminotransferase, domain 1"/>
    <property type="match status" value="1"/>
</dbReference>
<dbReference type="Gene3D" id="3.40.640.10">
    <property type="entry name" value="Type I PLP-dependent aspartate aminotransferase-like (Major domain)"/>
    <property type="match status" value="1"/>
</dbReference>
<dbReference type="HAMAP" id="MF_00051">
    <property type="entry name" value="SHMT"/>
    <property type="match status" value="1"/>
</dbReference>
<dbReference type="InterPro" id="IPR015424">
    <property type="entry name" value="PyrdxlP-dep_Trfase"/>
</dbReference>
<dbReference type="InterPro" id="IPR015421">
    <property type="entry name" value="PyrdxlP-dep_Trfase_major"/>
</dbReference>
<dbReference type="InterPro" id="IPR015422">
    <property type="entry name" value="PyrdxlP-dep_Trfase_small"/>
</dbReference>
<dbReference type="InterPro" id="IPR001085">
    <property type="entry name" value="Ser_HO-MeTrfase"/>
</dbReference>
<dbReference type="InterPro" id="IPR049943">
    <property type="entry name" value="Ser_HO-MeTrfase-like"/>
</dbReference>
<dbReference type="InterPro" id="IPR019798">
    <property type="entry name" value="Ser_HO-MeTrfase_PLP_BS"/>
</dbReference>
<dbReference type="InterPro" id="IPR039429">
    <property type="entry name" value="SHMT-like_dom"/>
</dbReference>
<dbReference type="NCBIfam" id="NF000586">
    <property type="entry name" value="PRK00011.1"/>
    <property type="match status" value="1"/>
</dbReference>
<dbReference type="PANTHER" id="PTHR11680">
    <property type="entry name" value="SERINE HYDROXYMETHYLTRANSFERASE"/>
    <property type="match status" value="1"/>
</dbReference>
<dbReference type="PANTHER" id="PTHR11680:SF50">
    <property type="entry name" value="SERINE HYDROXYMETHYLTRANSFERASE"/>
    <property type="match status" value="1"/>
</dbReference>
<dbReference type="Pfam" id="PF00464">
    <property type="entry name" value="SHMT"/>
    <property type="match status" value="1"/>
</dbReference>
<dbReference type="PIRSF" id="PIRSF000412">
    <property type="entry name" value="SHMT"/>
    <property type="match status" value="1"/>
</dbReference>
<dbReference type="SUPFAM" id="SSF53383">
    <property type="entry name" value="PLP-dependent transferases"/>
    <property type="match status" value="1"/>
</dbReference>
<dbReference type="PROSITE" id="PS00096">
    <property type="entry name" value="SHMT"/>
    <property type="match status" value="1"/>
</dbReference>
<reference key="1">
    <citation type="journal article" date="2005" name="Nucleic Acids Res.">
        <title>The genome sequence of Salmonella enterica serovar Choleraesuis, a highly invasive and resistant zoonotic pathogen.</title>
        <authorList>
            <person name="Chiu C.-H."/>
            <person name="Tang P."/>
            <person name="Chu C."/>
            <person name="Hu S."/>
            <person name="Bao Q."/>
            <person name="Yu J."/>
            <person name="Chou Y.-Y."/>
            <person name="Wang H.-S."/>
            <person name="Lee Y.-S."/>
        </authorList>
    </citation>
    <scope>NUCLEOTIDE SEQUENCE [LARGE SCALE GENOMIC DNA]</scope>
    <source>
        <strain>SC-B67</strain>
    </source>
</reference>
<keyword id="KW-0028">Amino-acid biosynthesis</keyword>
<keyword id="KW-0963">Cytoplasm</keyword>
<keyword id="KW-0554">One-carbon metabolism</keyword>
<keyword id="KW-0663">Pyridoxal phosphate</keyword>
<keyword id="KW-0808">Transferase</keyword>
<evidence type="ECO:0000255" key="1">
    <source>
        <dbReference type="HAMAP-Rule" id="MF_00051"/>
    </source>
</evidence>
<name>GLYA_SALCH</name>
<accession>Q57LF7</accession>
<organism>
    <name type="scientific">Salmonella choleraesuis (strain SC-B67)</name>
    <dbReference type="NCBI Taxonomy" id="321314"/>
    <lineage>
        <taxon>Bacteria</taxon>
        <taxon>Pseudomonadati</taxon>
        <taxon>Pseudomonadota</taxon>
        <taxon>Gammaproteobacteria</taxon>
        <taxon>Enterobacterales</taxon>
        <taxon>Enterobacteriaceae</taxon>
        <taxon>Salmonella</taxon>
    </lineage>
</organism>
<feature type="chain" id="PRO_0000235019" description="Serine hydroxymethyltransferase">
    <location>
        <begin position="1"/>
        <end position="417"/>
    </location>
</feature>
<feature type="binding site" evidence="1">
    <location>
        <position position="121"/>
    </location>
    <ligand>
        <name>(6S)-5,6,7,8-tetrahydrofolate</name>
        <dbReference type="ChEBI" id="CHEBI:57453"/>
    </ligand>
</feature>
<feature type="binding site" evidence="1">
    <location>
        <begin position="125"/>
        <end position="127"/>
    </location>
    <ligand>
        <name>(6S)-5,6,7,8-tetrahydrofolate</name>
        <dbReference type="ChEBI" id="CHEBI:57453"/>
    </ligand>
</feature>
<feature type="binding site" evidence="1">
    <location>
        <begin position="355"/>
        <end position="357"/>
    </location>
    <ligand>
        <name>(6S)-5,6,7,8-tetrahydrofolate</name>
        <dbReference type="ChEBI" id="CHEBI:57453"/>
    </ligand>
</feature>
<feature type="site" description="Plays an important role in substrate specificity" evidence="1">
    <location>
        <position position="228"/>
    </location>
</feature>
<feature type="modified residue" description="N6-(pyridoxal phosphate)lysine" evidence="1">
    <location>
        <position position="229"/>
    </location>
</feature>
<protein>
    <recommendedName>
        <fullName evidence="1">Serine hydroxymethyltransferase</fullName>
        <shortName evidence="1">SHMT</shortName>
        <shortName evidence="1">Serine methylase</shortName>
        <ecNumber evidence="1">2.1.2.1</ecNumber>
    </recommendedName>
</protein>
<comment type="function">
    <text evidence="1">Catalyzes the reversible interconversion of serine and glycine with tetrahydrofolate (THF) serving as the one-carbon carrier. This reaction serves as the major source of one-carbon groups required for the biosynthesis of purines, thymidylate, methionine, and other important biomolecules. Also exhibits THF-independent aldolase activity toward beta-hydroxyamino acids, producing glycine and aldehydes, via a retro-aldol mechanism.</text>
</comment>
<comment type="catalytic activity">
    <reaction evidence="1">
        <text>(6R)-5,10-methylene-5,6,7,8-tetrahydrofolate + glycine + H2O = (6S)-5,6,7,8-tetrahydrofolate + L-serine</text>
        <dbReference type="Rhea" id="RHEA:15481"/>
        <dbReference type="ChEBI" id="CHEBI:15377"/>
        <dbReference type="ChEBI" id="CHEBI:15636"/>
        <dbReference type="ChEBI" id="CHEBI:33384"/>
        <dbReference type="ChEBI" id="CHEBI:57305"/>
        <dbReference type="ChEBI" id="CHEBI:57453"/>
        <dbReference type="EC" id="2.1.2.1"/>
    </reaction>
</comment>
<comment type="cofactor">
    <cofactor evidence="1">
        <name>pyridoxal 5'-phosphate</name>
        <dbReference type="ChEBI" id="CHEBI:597326"/>
    </cofactor>
</comment>
<comment type="pathway">
    <text evidence="1">One-carbon metabolism; tetrahydrofolate interconversion.</text>
</comment>
<comment type="pathway">
    <text evidence="1">Amino-acid biosynthesis; glycine biosynthesis; glycine from L-serine: step 1/1.</text>
</comment>
<comment type="subunit">
    <text evidence="1">Homodimer.</text>
</comment>
<comment type="subcellular location">
    <subcellularLocation>
        <location evidence="1">Cytoplasm</location>
    </subcellularLocation>
</comment>
<comment type="similarity">
    <text evidence="1">Belongs to the SHMT family.</text>
</comment>
<sequence>MLKREMNIADYDAELWQAMEQEKVRQEEHIELIASENYTSPRVMQAQGSQLTNKYAEGYPGKRYYGGCEYVDVVEQLAIDRAKELFGADYANVQPHSGSQANFAVYTALLQPGDTVLGMNLAQGGHLTHGSPVNFSGKLYNIVPYGIDESGKIDYDEMAKLAKEHKPKMIIGGFSAYSGVVDWAKMREIADSIGAYLFVDMAHVAGLIAAGVYPNPVPHAHVVTTTTHKTLAGPRGGLILAKGGDEELYKKLNSAVFPSAQGGPLMHVIAGKAVALKEAMEPEFKVYQQQVAKNAKAMVEVFLNRGYKVVSGGTENHLFLLDLVDKNLTGKEADAALGRANITVNKNSVPNDPKSPFVTSGIRIGSPAVTRRGFKEAEVKELAGWMCDVLDNINDEATIERVKAKVLDICARFPVYA</sequence>